<evidence type="ECO:0000250" key="1"/>
<evidence type="ECO:0000255" key="2"/>
<evidence type="ECO:0000269" key="3">
    <source>
    </source>
</evidence>
<evidence type="ECO:0000269" key="4">
    <source>
    </source>
</evidence>
<evidence type="ECO:0000303" key="5">
    <source>
    </source>
</evidence>
<evidence type="ECO:0000303" key="6">
    <source>
    </source>
</evidence>
<evidence type="ECO:0000305" key="7"/>
<keyword id="KW-0025">Alternative splicing</keyword>
<keyword id="KW-0150">Chloroplast</keyword>
<keyword id="KW-0934">Plastid</keyword>
<keyword id="KW-1185">Reference proteome</keyword>
<keyword id="KW-0687">Ribonucleoprotein</keyword>
<keyword id="KW-0689">Ribosomal protein</keyword>
<keyword id="KW-0694">RNA-binding</keyword>
<keyword id="KW-0699">rRNA-binding</keyword>
<keyword id="KW-0809">Transit peptide</keyword>
<dbReference type="EMBL" id="Y09635">
    <property type="protein sequence ID" value="CAA70851.1"/>
    <property type="molecule type" value="mRNA"/>
</dbReference>
<dbReference type="EMBL" id="AB016879">
    <property type="protein sequence ID" value="BAB09339.1"/>
    <property type="molecule type" value="Genomic_DNA"/>
</dbReference>
<dbReference type="EMBL" id="CP002688">
    <property type="protein sequence ID" value="AED96516.1"/>
    <property type="molecule type" value="Genomic_DNA"/>
</dbReference>
<dbReference type="EMBL" id="BT001990">
    <property type="protein sequence ID" value="AAN72001.1"/>
    <property type="molecule type" value="mRNA"/>
</dbReference>
<dbReference type="EMBL" id="BT006573">
    <property type="protein sequence ID" value="AAP21381.1"/>
    <property type="molecule type" value="mRNA"/>
</dbReference>
<dbReference type="EMBL" id="AY086810">
    <property type="protein sequence ID" value="AAM63859.1"/>
    <property type="molecule type" value="mRNA"/>
</dbReference>
<dbReference type="RefSeq" id="NP_851190.1">
    <molecule id="P92959-1"/>
    <property type="nucleotide sequence ID" value="NM_180859.2"/>
</dbReference>
<dbReference type="SMR" id="P92959"/>
<dbReference type="BioGRID" id="20793">
    <property type="interactions" value="12"/>
</dbReference>
<dbReference type="FunCoup" id="P92959">
    <property type="interactions" value="1015"/>
</dbReference>
<dbReference type="STRING" id="3702.P92959"/>
<dbReference type="iPTMnet" id="P92959"/>
<dbReference type="PaxDb" id="3702-AT5G54600.1"/>
<dbReference type="ProteomicsDB" id="234808">
    <molecule id="P92959-1"/>
</dbReference>
<dbReference type="EnsemblPlants" id="AT5G54600.1">
    <molecule id="P92959-1"/>
    <property type="protein sequence ID" value="AT5G54600.1"/>
    <property type="gene ID" value="AT5G54600"/>
</dbReference>
<dbReference type="GeneID" id="835549"/>
<dbReference type="Gramene" id="AT5G54600.1">
    <molecule id="P92959-1"/>
    <property type="protein sequence ID" value="AT5G54600.1"/>
    <property type="gene ID" value="AT5G54600"/>
</dbReference>
<dbReference type="KEGG" id="ath:AT5G54600"/>
<dbReference type="Araport" id="AT5G54600"/>
<dbReference type="TAIR" id="AT5G54600">
    <property type="gene designation" value="RPL24"/>
</dbReference>
<dbReference type="eggNOG" id="KOG1708">
    <property type="taxonomic scope" value="Eukaryota"/>
</dbReference>
<dbReference type="HOGENOM" id="CLU_093315_1_0_1"/>
<dbReference type="InParanoid" id="P92959"/>
<dbReference type="OMA" id="KPCLIVV"/>
<dbReference type="OrthoDB" id="359154at2759"/>
<dbReference type="PhylomeDB" id="P92959"/>
<dbReference type="PRO" id="PR:P92959"/>
<dbReference type="Proteomes" id="UP000006548">
    <property type="component" value="Chromosome 5"/>
</dbReference>
<dbReference type="ExpressionAtlas" id="P92959">
    <property type="expression patterns" value="baseline and differential"/>
</dbReference>
<dbReference type="GO" id="GO:0009507">
    <property type="term" value="C:chloroplast"/>
    <property type="evidence" value="ECO:0000314"/>
    <property type="project" value="TAIR"/>
</dbReference>
<dbReference type="GO" id="GO:0009941">
    <property type="term" value="C:chloroplast envelope"/>
    <property type="evidence" value="ECO:0007005"/>
    <property type="project" value="TAIR"/>
</dbReference>
<dbReference type="GO" id="GO:0009570">
    <property type="term" value="C:chloroplast stroma"/>
    <property type="evidence" value="ECO:0007005"/>
    <property type="project" value="TAIR"/>
</dbReference>
<dbReference type="GO" id="GO:0009536">
    <property type="term" value="C:plastid"/>
    <property type="evidence" value="ECO:0007005"/>
    <property type="project" value="TAIR"/>
</dbReference>
<dbReference type="GO" id="GO:1990904">
    <property type="term" value="C:ribonucleoprotein complex"/>
    <property type="evidence" value="ECO:0007669"/>
    <property type="project" value="UniProtKB-KW"/>
</dbReference>
<dbReference type="GO" id="GO:0005840">
    <property type="term" value="C:ribosome"/>
    <property type="evidence" value="ECO:0007669"/>
    <property type="project" value="UniProtKB-KW"/>
</dbReference>
<dbReference type="GO" id="GO:0003729">
    <property type="term" value="F:mRNA binding"/>
    <property type="evidence" value="ECO:0000314"/>
    <property type="project" value="TAIR"/>
</dbReference>
<dbReference type="GO" id="GO:0019843">
    <property type="term" value="F:rRNA binding"/>
    <property type="evidence" value="ECO:0007669"/>
    <property type="project" value="UniProtKB-KW"/>
</dbReference>
<dbReference type="GO" id="GO:0003735">
    <property type="term" value="F:structural constituent of ribosome"/>
    <property type="evidence" value="ECO:0007669"/>
    <property type="project" value="InterPro"/>
</dbReference>
<dbReference type="GO" id="GO:0032544">
    <property type="term" value="P:plastid translation"/>
    <property type="evidence" value="ECO:0000315"/>
    <property type="project" value="TAIR"/>
</dbReference>
<dbReference type="CDD" id="cd06089">
    <property type="entry name" value="KOW_RPL26"/>
    <property type="match status" value="1"/>
</dbReference>
<dbReference type="Gene3D" id="2.30.30.30">
    <property type="match status" value="1"/>
</dbReference>
<dbReference type="HAMAP" id="MF_01326_B">
    <property type="entry name" value="Ribosomal_uL24_B"/>
    <property type="match status" value="1"/>
</dbReference>
<dbReference type="InterPro" id="IPR005824">
    <property type="entry name" value="KOW"/>
</dbReference>
<dbReference type="InterPro" id="IPR014722">
    <property type="entry name" value="Rib_uL2_dom2"/>
</dbReference>
<dbReference type="InterPro" id="IPR003256">
    <property type="entry name" value="Ribosomal_uL24"/>
</dbReference>
<dbReference type="InterPro" id="IPR005825">
    <property type="entry name" value="Ribosomal_uL24_CS"/>
</dbReference>
<dbReference type="InterPro" id="IPR041988">
    <property type="entry name" value="Ribosomal_uL24_KOW"/>
</dbReference>
<dbReference type="InterPro" id="IPR008991">
    <property type="entry name" value="Translation_prot_SH3-like_sf"/>
</dbReference>
<dbReference type="NCBIfam" id="TIGR01079">
    <property type="entry name" value="rplX_bact"/>
    <property type="match status" value="1"/>
</dbReference>
<dbReference type="PANTHER" id="PTHR12903">
    <property type="entry name" value="MITOCHONDRIAL RIBOSOMAL PROTEIN L24"/>
    <property type="match status" value="1"/>
</dbReference>
<dbReference type="Pfam" id="PF00467">
    <property type="entry name" value="KOW"/>
    <property type="match status" value="1"/>
</dbReference>
<dbReference type="Pfam" id="PF17136">
    <property type="entry name" value="ribosomal_L24"/>
    <property type="match status" value="1"/>
</dbReference>
<dbReference type="SMART" id="SM00739">
    <property type="entry name" value="KOW"/>
    <property type="match status" value="1"/>
</dbReference>
<dbReference type="SUPFAM" id="SSF50104">
    <property type="entry name" value="Translation proteins SH3-like domain"/>
    <property type="match status" value="1"/>
</dbReference>
<dbReference type="PROSITE" id="PS01108">
    <property type="entry name" value="RIBOSOMAL_L24"/>
    <property type="match status" value="1"/>
</dbReference>
<reference key="1">
    <citation type="submission" date="1996-11" db="EMBL/GenBank/DDBJ databases">
        <title>Isolation of a cDNA from Arabidopsis thaliana encoding a plastid ribosomal protein.</title>
        <authorList>
            <person name="Galichet A."/>
            <person name="Bach T.J."/>
        </authorList>
    </citation>
    <scope>NUCLEOTIDE SEQUENCE [MRNA]</scope>
    <source>
        <strain>cv. Landsberg erecta</strain>
    </source>
</reference>
<reference key="2">
    <citation type="journal article" date="1998" name="DNA Res.">
        <title>Structural analysis of Arabidopsis thaliana chromosome 5. VII. Sequence features of the regions of 1,013,767 bp covered by sixteen physically assigned P1 and TAC clones.</title>
        <authorList>
            <person name="Nakamura Y."/>
            <person name="Sato S."/>
            <person name="Asamizu E."/>
            <person name="Kaneko T."/>
            <person name="Kotani H."/>
            <person name="Miyajima N."/>
            <person name="Tabata S."/>
        </authorList>
    </citation>
    <scope>NUCLEOTIDE SEQUENCE [LARGE SCALE GENOMIC DNA]</scope>
    <source>
        <strain>cv. Columbia</strain>
    </source>
</reference>
<reference key="3">
    <citation type="journal article" date="2017" name="Plant J.">
        <title>Araport11: a complete reannotation of the Arabidopsis thaliana reference genome.</title>
        <authorList>
            <person name="Cheng C.Y."/>
            <person name="Krishnakumar V."/>
            <person name="Chan A.P."/>
            <person name="Thibaud-Nissen F."/>
            <person name="Schobel S."/>
            <person name="Town C.D."/>
        </authorList>
    </citation>
    <scope>GENOME REANNOTATION</scope>
    <source>
        <strain>cv. Columbia</strain>
    </source>
</reference>
<reference key="4">
    <citation type="journal article" date="2003" name="Science">
        <title>Empirical analysis of transcriptional activity in the Arabidopsis genome.</title>
        <authorList>
            <person name="Yamada K."/>
            <person name="Lim J."/>
            <person name="Dale J.M."/>
            <person name="Chen H."/>
            <person name="Shinn P."/>
            <person name="Palm C.J."/>
            <person name="Southwick A.M."/>
            <person name="Wu H.C."/>
            <person name="Kim C.J."/>
            <person name="Nguyen M."/>
            <person name="Pham P.K."/>
            <person name="Cheuk R.F."/>
            <person name="Karlin-Newmann G."/>
            <person name="Liu S.X."/>
            <person name="Lam B."/>
            <person name="Sakano H."/>
            <person name="Wu T."/>
            <person name="Yu G."/>
            <person name="Miranda M."/>
            <person name="Quach H.L."/>
            <person name="Tripp M."/>
            <person name="Chang C.H."/>
            <person name="Lee J.M."/>
            <person name="Toriumi M.J."/>
            <person name="Chan M.M."/>
            <person name="Tang C.C."/>
            <person name="Onodera C.S."/>
            <person name="Deng J.M."/>
            <person name="Akiyama K."/>
            <person name="Ansari Y."/>
            <person name="Arakawa T."/>
            <person name="Banh J."/>
            <person name="Banno F."/>
            <person name="Bowser L."/>
            <person name="Brooks S.Y."/>
            <person name="Carninci P."/>
            <person name="Chao Q."/>
            <person name="Choy N."/>
            <person name="Enju A."/>
            <person name="Goldsmith A.D."/>
            <person name="Gurjal M."/>
            <person name="Hansen N.F."/>
            <person name="Hayashizaki Y."/>
            <person name="Johnson-Hopson C."/>
            <person name="Hsuan V.W."/>
            <person name="Iida K."/>
            <person name="Karnes M."/>
            <person name="Khan S."/>
            <person name="Koesema E."/>
            <person name="Ishida J."/>
            <person name="Jiang P.X."/>
            <person name="Jones T."/>
            <person name="Kawai J."/>
            <person name="Kamiya A."/>
            <person name="Meyers C."/>
            <person name="Nakajima M."/>
            <person name="Narusaka M."/>
            <person name="Seki M."/>
            <person name="Sakurai T."/>
            <person name="Satou M."/>
            <person name="Tamse R."/>
            <person name="Vaysberg M."/>
            <person name="Wallender E.K."/>
            <person name="Wong C."/>
            <person name="Yamamura Y."/>
            <person name="Yuan S."/>
            <person name="Shinozaki K."/>
            <person name="Davis R.W."/>
            <person name="Theologis A."/>
            <person name="Ecker J.R."/>
        </authorList>
    </citation>
    <scope>NUCLEOTIDE SEQUENCE [LARGE SCALE MRNA]</scope>
    <source>
        <strain>cv. Columbia</strain>
    </source>
</reference>
<reference key="5">
    <citation type="submission" date="2002-03" db="EMBL/GenBank/DDBJ databases">
        <title>Full-length cDNA from Arabidopsis thaliana.</title>
        <authorList>
            <person name="Brover V.V."/>
            <person name="Troukhan M.E."/>
            <person name="Alexandrov N.A."/>
            <person name="Lu Y.-P."/>
            <person name="Flavell R.B."/>
            <person name="Feldmann K.A."/>
        </authorList>
    </citation>
    <scope>NUCLEOTIDE SEQUENCE [LARGE SCALE MRNA]</scope>
</reference>
<reference key="6">
    <citation type="journal article" date="2012" name="Plant J.">
        <title>The plastid-specific ribosomal proteins of Arabidopsis thaliana can be divided into non-essential proteins and genuine ribosomal proteins.</title>
        <authorList>
            <person name="Tiller N."/>
            <person name="Weingartner M."/>
            <person name="Thiele W."/>
            <person name="Maximova E."/>
            <person name="Schoettler M.A."/>
            <person name="Bock R."/>
        </authorList>
    </citation>
    <scope>SUBCELLULAR LOCATION</scope>
    <scope>DISRUPTION PHENOTYPE</scope>
</reference>
<reference key="7">
    <citation type="journal article" date="2012" name="Plant J.">
        <title>Versatile roles of Arabidopsis plastid ribosomal proteins in plant growth and development.</title>
        <authorList>
            <person name="Romani I."/>
            <person name="Tadini L."/>
            <person name="Rossi F."/>
            <person name="Masiero S."/>
            <person name="Pribil M."/>
            <person name="Jahns P."/>
            <person name="Kater M."/>
            <person name="Leister D."/>
            <person name="Pesaresi P."/>
        </authorList>
    </citation>
    <scope>FUNCTION</scope>
    <scope>DISRUPTION PHENOTYPE</scope>
</reference>
<reference key="8">
    <citation type="journal article" date="2023" name="Plant Cell">
        <title>An updated nomenclature for plant ribosomal protein genes.</title>
        <authorList>
            <person name="Scarpin M.R."/>
            <person name="Busche M."/>
            <person name="Martinez R.E."/>
            <person name="Harper L.C."/>
            <person name="Reiser L."/>
            <person name="Szakonyi D."/>
            <person name="Merchante C."/>
            <person name="Lan T."/>
            <person name="Xiong W."/>
            <person name="Mo B."/>
            <person name="Tang G."/>
            <person name="Chen X."/>
            <person name="Bailey-Serres J."/>
            <person name="Browning K.S."/>
            <person name="Brunkard J.O."/>
        </authorList>
    </citation>
    <scope>NOMENCLATURE</scope>
</reference>
<feature type="transit peptide" description="Chloroplast" evidence="2">
    <location>
        <begin position="1"/>
        <end position="50"/>
    </location>
</feature>
<feature type="chain" id="PRO_0000030489" description="Large ribosomal subunit protein uL24c">
    <location>
        <begin position="51"/>
        <end position="198"/>
    </location>
</feature>
<feature type="sequence conflict" description="In Ref. 1; CAA70851." evidence="7" ref="1">
    <original>VV</original>
    <variation>IL</variation>
    <location>
        <begin position="147"/>
        <end position="148"/>
    </location>
</feature>
<organism>
    <name type="scientific">Arabidopsis thaliana</name>
    <name type="common">Mouse-ear cress</name>
    <dbReference type="NCBI Taxonomy" id="3702"/>
    <lineage>
        <taxon>Eukaryota</taxon>
        <taxon>Viridiplantae</taxon>
        <taxon>Streptophyta</taxon>
        <taxon>Embryophyta</taxon>
        <taxon>Tracheophyta</taxon>
        <taxon>Spermatophyta</taxon>
        <taxon>Magnoliopsida</taxon>
        <taxon>eudicotyledons</taxon>
        <taxon>Gunneridae</taxon>
        <taxon>Pentapetalae</taxon>
        <taxon>rosids</taxon>
        <taxon>malvids</taxon>
        <taxon>Brassicales</taxon>
        <taxon>Brassicaceae</taxon>
        <taxon>Camelineae</taxon>
        <taxon>Arabidopsis</taxon>
    </lineage>
</organism>
<sequence>MATMSALQSSFTSLSLSPSSSFLGQRLISPISLSVTSPVKPAENPCLVLAKLKRWERKECKPNSLPILHKMHVKFGDTVKVISGRDKGKIGEVTKIFTHNSTIVIKDVNLKTKHMKSREEGEPGQIVKIEAPIHSSNVMLYSKEKDVVSRVGHKVLEDGQKVRYLIKTGELIDTIEKWKLLKEAKDKETTQVAVTSAS</sequence>
<comment type="function">
    <text evidence="1 4">One of two assembly initiator proteins, it binds directly to the 5'-end of the 23S rRNA, where it nucleates assembly of the 50S subunit (By similarity). Required for optimal plastid performance in terms of photosynthesis and growth. Required for the translation of plastid mRNAs. Plays a critical role in biosynthesis of thylakoid membrane proteins encoded by chloroplast genes (PubMed:22900828).</text>
</comment>
<comment type="subunit">
    <text>Part of the 50S ribosomal subunit.</text>
</comment>
<comment type="subcellular location">
    <subcellularLocation>
        <location evidence="3">Plastid</location>
        <location evidence="3">Chloroplast</location>
    </subcellularLocation>
</comment>
<comment type="alternative products">
    <event type="alternative splicing"/>
    <isoform>
        <id>P92959-1</id>
        <name>1</name>
        <sequence type="displayed"/>
    </isoform>
    <text>A number of isoforms are produced. According to EST sequences.</text>
</comment>
<comment type="disruption phenotype">
    <text evidence="4">Reduced plant size and pale green leaves.</text>
</comment>
<comment type="similarity">
    <text evidence="7">Belongs to the universal ribosomal protein uL24 family.</text>
</comment>
<proteinExistence type="evidence at transcript level"/>
<name>RK24_ARATH</name>
<gene>
    <name type="primary">RPL24</name>
    <name evidence="5" type="synonym">SVR8</name>
    <name type="ordered locus">At5g54600</name>
    <name type="ORF">MRB17.10</name>
</gene>
<accession>P92959</accession>
<accession>Q9FIU4</accession>
<protein>
    <recommendedName>
        <fullName evidence="6">Large ribosomal subunit protein uL24c</fullName>
    </recommendedName>
    <alternativeName>
        <fullName>50S ribosomal protein L24, chloroplastic</fullName>
    </alternativeName>
    <alternativeName>
        <fullName>CL24</fullName>
    </alternativeName>
    <alternativeName>
        <fullName evidence="5">Protein SUPPRESSOR OF VARIEGATION 8</fullName>
    </alternativeName>
</protein>